<protein>
    <recommendedName>
        <fullName evidence="1">Large ribosomal subunit protein bL34</fullName>
    </recommendedName>
    <alternativeName>
        <fullName evidence="3">50S ribosomal protein L34</fullName>
    </alternativeName>
</protein>
<gene>
    <name evidence="1" type="primary">rpmH</name>
    <name type="ordered locus">CTL0153.1</name>
    <name type="ORF">CTL0153A</name>
</gene>
<organism>
    <name type="scientific">Chlamydia trachomatis serovar L2 (strain ATCC VR-902B / DSM 19102 / 434/Bu)</name>
    <dbReference type="NCBI Taxonomy" id="471472"/>
    <lineage>
        <taxon>Bacteria</taxon>
        <taxon>Pseudomonadati</taxon>
        <taxon>Chlamydiota</taxon>
        <taxon>Chlamydiia</taxon>
        <taxon>Chlamydiales</taxon>
        <taxon>Chlamydiaceae</taxon>
        <taxon>Chlamydia/Chlamydophila group</taxon>
        <taxon>Chlamydia</taxon>
    </lineage>
</organism>
<comment type="similarity">
    <text evidence="1">Belongs to the bacterial ribosomal protein bL34 family.</text>
</comment>
<evidence type="ECO:0000255" key="1">
    <source>
        <dbReference type="HAMAP-Rule" id="MF_00391"/>
    </source>
</evidence>
<evidence type="ECO:0000256" key="2">
    <source>
        <dbReference type="SAM" id="MobiDB-lite"/>
    </source>
</evidence>
<evidence type="ECO:0000305" key="3"/>
<keyword id="KW-0687">Ribonucleoprotein</keyword>
<keyword id="KW-0689">Ribosomal protein</keyword>
<feature type="chain" id="PRO_1000196019" description="Large ribosomal subunit protein bL34">
    <location>
        <begin position="1"/>
        <end position="45"/>
    </location>
</feature>
<feature type="region of interest" description="Disordered" evidence="2">
    <location>
        <begin position="1"/>
        <end position="45"/>
    </location>
</feature>
<feature type="compositionally biased region" description="Basic residues" evidence="2">
    <location>
        <begin position="1"/>
        <end position="14"/>
    </location>
</feature>
<feature type="compositionally biased region" description="Basic residues" evidence="2">
    <location>
        <begin position="31"/>
        <end position="45"/>
    </location>
</feature>
<dbReference type="EMBL" id="AM884176">
    <property type="protein sequence ID" value="CAP03598.1"/>
    <property type="molecule type" value="Genomic_DNA"/>
</dbReference>
<dbReference type="RefSeq" id="WP_010725344.1">
    <property type="nucleotide sequence ID" value="NC_010287.1"/>
</dbReference>
<dbReference type="RefSeq" id="YP_001654245.1">
    <property type="nucleotide sequence ID" value="NC_010287.1"/>
</dbReference>
<dbReference type="SMR" id="B0B911"/>
<dbReference type="GeneID" id="93065660"/>
<dbReference type="KEGG" id="ctb:CTL0153A"/>
<dbReference type="PATRIC" id="fig|471472.4.peg.166"/>
<dbReference type="HOGENOM" id="CLU_129938_2_1_0"/>
<dbReference type="Proteomes" id="UP001154402">
    <property type="component" value="Chromosome"/>
</dbReference>
<dbReference type="GO" id="GO:1990904">
    <property type="term" value="C:ribonucleoprotein complex"/>
    <property type="evidence" value="ECO:0007669"/>
    <property type="project" value="UniProtKB-KW"/>
</dbReference>
<dbReference type="GO" id="GO:0005840">
    <property type="term" value="C:ribosome"/>
    <property type="evidence" value="ECO:0007669"/>
    <property type="project" value="UniProtKB-KW"/>
</dbReference>
<dbReference type="GO" id="GO:0003735">
    <property type="term" value="F:structural constituent of ribosome"/>
    <property type="evidence" value="ECO:0007669"/>
    <property type="project" value="InterPro"/>
</dbReference>
<dbReference type="GO" id="GO:0006412">
    <property type="term" value="P:translation"/>
    <property type="evidence" value="ECO:0007669"/>
    <property type="project" value="UniProtKB-UniRule"/>
</dbReference>
<dbReference type="FunFam" id="1.10.287.3980:FF:000001">
    <property type="entry name" value="Mitochondrial ribosomal protein L34"/>
    <property type="match status" value="1"/>
</dbReference>
<dbReference type="Gene3D" id="1.10.287.3980">
    <property type="match status" value="1"/>
</dbReference>
<dbReference type="HAMAP" id="MF_00391">
    <property type="entry name" value="Ribosomal_bL34"/>
    <property type="match status" value="1"/>
</dbReference>
<dbReference type="InterPro" id="IPR000271">
    <property type="entry name" value="Ribosomal_bL34"/>
</dbReference>
<dbReference type="InterPro" id="IPR020939">
    <property type="entry name" value="Ribosomal_bL34_CS"/>
</dbReference>
<dbReference type="NCBIfam" id="TIGR01030">
    <property type="entry name" value="rpmH_bact"/>
    <property type="match status" value="1"/>
</dbReference>
<dbReference type="PANTHER" id="PTHR14503:SF4">
    <property type="entry name" value="LARGE RIBOSOMAL SUBUNIT PROTEIN BL34M"/>
    <property type="match status" value="1"/>
</dbReference>
<dbReference type="PANTHER" id="PTHR14503">
    <property type="entry name" value="MITOCHONDRIAL RIBOSOMAL PROTEIN 34 FAMILY MEMBER"/>
    <property type="match status" value="1"/>
</dbReference>
<dbReference type="Pfam" id="PF00468">
    <property type="entry name" value="Ribosomal_L34"/>
    <property type="match status" value="1"/>
</dbReference>
<dbReference type="PROSITE" id="PS00784">
    <property type="entry name" value="RIBOSOMAL_L34"/>
    <property type="match status" value="1"/>
</dbReference>
<reference key="1">
    <citation type="journal article" date="2008" name="Genome Res.">
        <title>Chlamydia trachomatis: genome sequence analysis of lymphogranuloma venereum isolates.</title>
        <authorList>
            <person name="Thomson N.R."/>
            <person name="Holden M.T.G."/>
            <person name="Carder C."/>
            <person name="Lennard N."/>
            <person name="Lockey S.J."/>
            <person name="Marsh P."/>
            <person name="Skipp P."/>
            <person name="O'Connor C.D."/>
            <person name="Goodhead I."/>
            <person name="Norbertzcak H."/>
            <person name="Harris B."/>
            <person name="Ormond D."/>
            <person name="Rance R."/>
            <person name="Quail M.A."/>
            <person name="Parkhill J."/>
            <person name="Stephens R.S."/>
            <person name="Clarke I.N."/>
        </authorList>
    </citation>
    <scope>NUCLEOTIDE SEQUENCE [LARGE SCALE GENOMIC DNA]</scope>
    <source>
        <strain>ATCC VR-902B / DSM 19102 / 434/Bu</strain>
    </source>
</reference>
<name>RL34_CHLT2</name>
<proteinExistence type="inferred from homology"/>
<sequence>MKRTYQPSKRKRRNSVGFRARMATKSGRNLLNRRRRHGRHSLIDL</sequence>
<accession>B0B911</accession>